<feature type="chain" id="PRO_1000126350" description="Probable transaldolase">
    <location>
        <begin position="1"/>
        <end position="219"/>
    </location>
</feature>
<feature type="active site" description="Schiff-base intermediate with substrate" evidence="1">
    <location>
        <position position="83"/>
    </location>
</feature>
<organism>
    <name type="scientific">Cereibacter sphaeroides (strain ATCC 17025 / ATH 2.4.3)</name>
    <name type="common">Rhodobacter sphaeroides</name>
    <dbReference type="NCBI Taxonomy" id="349102"/>
    <lineage>
        <taxon>Bacteria</taxon>
        <taxon>Pseudomonadati</taxon>
        <taxon>Pseudomonadota</taxon>
        <taxon>Alphaproteobacteria</taxon>
        <taxon>Rhodobacterales</taxon>
        <taxon>Paracoccaceae</taxon>
        <taxon>Cereibacter</taxon>
    </lineage>
</organism>
<gene>
    <name evidence="1" type="primary">tal</name>
    <name type="ordered locus">Rsph17025_1224</name>
</gene>
<protein>
    <recommendedName>
        <fullName evidence="1">Probable transaldolase</fullName>
        <ecNumber evidence="1">2.2.1.2</ecNumber>
    </recommendedName>
</protein>
<reference key="1">
    <citation type="submission" date="2007-04" db="EMBL/GenBank/DDBJ databases">
        <title>Complete sequence of chromosome of Rhodobacter sphaeroides ATCC 17025.</title>
        <authorList>
            <consortium name="US DOE Joint Genome Institute"/>
            <person name="Copeland A."/>
            <person name="Lucas S."/>
            <person name="Lapidus A."/>
            <person name="Barry K."/>
            <person name="Detter J.C."/>
            <person name="Glavina del Rio T."/>
            <person name="Hammon N."/>
            <person name="Israni S."/>
            <person name="Dalin E."/>
            <person name="Tice H."/>
            <person name="Pitluck S."/>
            <person name="Chertkov O."/>
            <person name="Brettin T."/>
            <person name="Bruce D."/>
            <person name="Han C."/>
            <person name="Schmutz J."/>
            <person name="Larimer F."/>
            <person name="Land M."/>
            <person name="Hauser L."/>
            <person name="Kyrpides N."/>
            <person name="Kim E."/>
            <person name="Richardson P."/>
            <person name="Mackenzie C."/>
            <person name="Choudhary M."/>
            <person name="Donohue T.J."/>
            <person name="Kaplan S."/>
        </authorList>
    </citation>
    <scope>NUCLEOTIDE SEQUENCE [LARGE SCALE GENOMIC DNA]</scope>
    <source>
        <strain>ATCC 17025 / ATH 2.4.3</strain>
    </source>
</reference>
<keyword id="KW-0963">Cytoplasm</keyword>
<keyword id="KW-0570">Pentose shunt</keyword>
<keyword id="KW-0704">Schiff base</keyword>
<keyword id="KW-0808">Transferase</keyword>
<name>TAL_CERS5</name>
<evidence type="ECO:0000255" key="1">
    <source>
        <dbReference type="HAMAP-Rule" id="MF_00494"/>
    </source>
</evidence>
<proteinExistence type="inferred from homology"/>
<dbReference type="EC" id="2.2.1.2" evidence="1"/>
<dbReference type="EMBL" id="CP000661">
    <property type="protein sequence ID" value="ABP70125.1"/>
    <property type="molecule type" value="Genomic_DNA"/>
</dbReference>
<dbReference type="SMR" id="A4WRW1"/>
<dbReference type="STRING" id="349102.Rsph17025_1224"/>
<dbReference type="KEGG" id="rsq:Rsph17025_1224"/>
<dbReference type="eggNOG" id="COG0176">
    <property type="taxonomic scope" value="Bacteria"/>
</dbReference>
<dbReference type="HOGENOM" id="CLU_079764_0_0_5"/>
<dbReference type="BioCyc" id="RSPH349102:G1G8M-1252-MONOMER"/>
<dbReference type="UniPathway" id="UPA00115">
    <property type="reaction ID" value="UER00414"/>
</dbReference>
<dbReference type="GO" id="GO:0005737">
    <property type="term" value="C:cytoplasm"/>
    <property type="evidence" value="ECO:0007669"/>
    <property type="project" value="UniProtKB-SubCell"/>
</dbReference>
<dbReference type="GO" id="GO:0016832">
    <property type="term" value="F:aldehyde-lyase activity"/>
    <property type="evidence" value="ECO:0007669"/>
    <property type="project" value="InterPro"/>
</dbReference>
<dbReference type="GO" id="GO:0004801">
    <property type="term" value="F:transaldolase activity"/>
    <property type="evidence" value="ECO:0007669"/>
    <property type="project" value="UniProtKB-UniRule"/>
</dbReference>
<dbReference type="GO" id="GO:0005975">
    <property type="term" value="P:carbohydrate metabolic process"/>
    <property type="evidence" value="ECO:0007669"/>
    <property type="project" value="InterPro"/>
</dbReference>
<dbReference type="GO" id="GO:0006098">
    <property type="term" value="P:pentose-phosphate shunt"/>
    <property type="evidence" value="ECO:0007669"/>
    <property type="project" value="UniProtKB-UniRule"/>
</dbReference>
<dbReference type="CDD" id="cd00956">
    <property type="entry name" value="Transaldolase_FSA"/>
    <property type="match status" value="1"/>
</dbReference>
<dbReference type="FunFam" id="3.20.20.70:FF:000018">
    <property type="entry name" value="Probable transaldolase"/>
    <property type="match status" value="1"/>
</dbReference>
<dbReference type="Gene3D" id="3.20.20.70">
    <property type="entry name" value="Aldolase class I"/>
    <property type="match status" value="1"/>
</dbReference>
<dbReference type="HAMAP" id="MF_00494">
    <property type="entry name" value="Transaldolase_3b"/>
    <property type="match status" value="1"/>
</dbReference>
<dbReference type="InterPro" id="IPR013785">
    <property type="entry name" value="Aldolase_TIM"/>
</dbReference>
<dbReference type="InterPro" id="IPR001585">
    <property type="entry name" value="TAL/FSA"/>
</dbReference>
<dbReference type="InterPro" id="IPR022999">
    <property type="entry name" value="Transaldolase_3B"/>
</dbReference>
<dbReference type="InterPro" id="IPR004731">
    <property type="entry name" value="Transaldolase_3B/F6P_aldolase"/>
</dbReference>
<dbReference type="InterPro" id="IPR018225">
    <property type="entry name" value="Transaldolase_AS"/>
</dbReference>
<dbReference type="InterPro" id="IPR033919">
    <property type="entry name" value="TSA/FSA_arc/bac"/>
</dbReference>
<dbReference type="NCBIfam" id="TIGR00875">
    <property type="entry name" value="fsa_talC_mipB"/>
    <property type="match status" value="1"/>
</dbReference>
<dbReference type="PANTHER" id="PTHR10683:SF40">
    <property type="entry name" value="FRUCTOSE-6-PHOSPHATE ALDOLASE 1-RELATED"/>
    <property type="match status" value="1"/>
</dbReference>
<dbReference type="PANTHER" id="PTHR10683">
    <property type="entry name" value="TRANSALDOLASE"/>
    <property type="match status" value="1"/>
</dbReference>
<dbReference type="Pfam" id="PF00923">
    <property type="entry name" value="TAL_FSA"/>
    <property type="match status" value="1"/>
</dbReference>
<dbReference type="SUPFAM" id="SSF51569">
    <property type="entry name" value="Aldolase"/>
    <property type="match status" value="1"/>
</dbReference>
<dbReference type="PROSITE" id="PS01054">
    <property type="entry name" value="TRANSALDOLASE_1"/>
    <property type="match status" value="1"/>
</dbReference>
<dbReference type="PROSITE" id="PS00958">
    <property type="entry name" value="TRANSALDOLASE_2"/>
    <property type="match status" value="1"/>
</dbReference>
<comment type="function">
    <text evidence="1">Transaldolase is important for the balance of metabolites in the pentose-phosphate pathway.</text>
</comment>
<comment type="catalytic activity">
    <reaction evidence="1">
        <text>D-sedoheptulose 7-phosphate + D-glyceraldehyde 3-phosphate = D-erythrose 4-phosphate + beta-D-fructose 6-phosphate</text>
        <dbReference type="Rhea" id="RHEA:17053"/>
        <dbReference type="ChEBI" id="CHEBI:16897"/>
        <dbReference type="ChEBI" id="CHEBI:57483"/>
        <dbReference type="ChEBI" id="CHEBI:57634"/>
        <dbReference type="ChEBI" id="CHEBI:59776"/>
        <dbReference type="EC" id="2.2.1.2"/>
    </reaction>
</comment>
<comment type="pathway">
    <text evidence="1">Carbohydrate degradation; pentose phosphate pathway; D-glyceraldehyde 3-phosphate and beta-D-fructose 6-phosphate from D-ribose 5-phosphate and D-xylulose 5-phosphate (non-oxidative stage): step 2/3.</text>
</comment>
<comment type="subcellular location">
    <subcellularLocation>
        <location evidence="1">Cytoplasm</location>
    </subcellularLocation>
</comment>
<comment type="similarity">
    <text evidence="1">Belongs to the transaldolase family. Type 3B subfamily.</text>
</comment>
<sequence>MKFFVDSADVAAIAELNALGMVDGVTTNPSLILKSGRNILEVTREICDLVAGPVSAEVVAAKADDMIEEGRKLAEIAPNITVKVPLTWDGLKACKVLTDEGRMVNVTLCFSVNQALLAAKAGATFISPFIGRLDDINLDGLELIADIRQVYDNYDFQTEVLAASIRTPNHVAQCARIGADVITAPPAVIKGLANHVLTDKGLEMFDADWAKTGQTILSL</sequence>
<accession>A4WRW1</accession>